<protein>
    <recommendedName>
        <fullName>Dihydropyrimidine dehydrogenase [NADP(+)]</fullName>
        <shortName>DHPDHase</shortName>
        <shortName>DPD</shortName>
        <ecNumber evidence="2">1.3.1.2</ecNumber>
    </recommendedName>
    <alternativeName>
        <fullName>Dihydrothymine dehydrogenase</fullName>
    </alternativeName>
    <alternativeName>
        <fullName>Dihydrouracil dehydrogenase</fullName>
    </alternativeName>
</protein>
<gene>
    <name type="primary">DPYD</name>
</gene>
<proteinExistence type="evidence at protein level"/>
<dbReference type="EC" id="1.3.1.2" evidence="2"/>
<dbReference type="EMBL" id="U20981">
    <property type="protein sequence ID" value="AAB40985.1"/>
    <property type="molecule type" value="mRNA"/>
</dbReference>
<dbReference type="PIR" id="A44626">
    <property type="entry name" value="A44626"/>
</dbReference>
<dbReference type="RefSeq" id="NP_776466.1">
    <property type="nucleotide sequence ID" value="NM_174041.2"/>
</dbReference>
<dbReference type="SMR" id="Q28007"/>
<dbReference type="FunCoup" id="Q28007">
    <property type="interactions" value="443"/>
</dbReference>
<dbReference type="STRING" id="9913.ENSBTAP00000007139"/>
<dbReference type="ChEMBL" id="CHEMBL4630827"/>
<dbReference type="PaxDb" id="9913-ENSBTAP00000007139"/>
<dbReference type="GeneID" id="281124"/>
<dbReference type="KEGG" id="bta:281124"/>
<dbReference type="CTD" id="1806"/>
<dbReference type="eggNOG" id="KOG1799">
    <property type="taxonomic scope" value="Eukaryota"/>
</dbReference>
<dbReference type="InParanoid" id="Q28007"/>
<dbReference type="OrthoDB" id="4327079at2759"/>
<dbReference type="UniPathway" id="UPA00131"/>
<dbReference type="Proteomes" id="UP000009136">
    <property type="component" value="Unplaced"/>
</dbReference>
<dbReference type="GO" id="GO:0005737">
    <property type="term" value="C:cytoplasm"/>
    <property type="evidence" value="ECO:0000250"/>
    <property type="project" value="UniProtKB"/>
</dbReference>
<dbReference type="GO" id="GO:0005829">
    <property type="term" value="C:cytosol"/>
    <property type="evidence" value="ECO:0000318"/>
    <property type="project" value="GO_Central"/>
</dbReference>
<dbReference type="GO" id="GO:0051539">
    <property type="term" value="F:4 iron, 4 sulfur cluster binding"/>
    <property type="evidence" value="ECO:0007669"/>
    <property type="project" value="UniProtKB-KW"/>
</dbReference>
<dbReference type="GO" id="GO:0017113">
    <property type="term" value="F:dihydropyrimidine dehydrogenase (NADP+) activity"/>
    <property type="evidence" value="ECO:0000314"/>
    <property type="project" value="UniProtKB"/>
</dbReference>
<dbReference type="GO" id="GO:0046872">
    <property type="term" value="F:metal ion binding"/>
    <property type="evidence" value="ECO:0007669"/>
    <property type="project" value="UniProtKB-KW"/>
</dbReference>
<dbReference type="GO" id="GO:0050661">
    <property type="term" value="F:NADP binding"/>
    <property type="evidence" value="ECO:0000314"/>
    <property type="project" value="UniProtKB"/>
</dbReference>
<dbReference type="GO" id="GO:0042803">
    <property type="term" value="F:protein homodimerization activity"/>
    <property type="evidence" value="ECO:0000314"/>
    <property type="project" value="UniProtKB"/>
</dbReference>
<dbReference type="GO" id="GO:0002058">
    <property type="term" value="F:uracil binding"/>
    <property type="evidence" value="ECO:0000318"/>
    <property type="project" value="GO_Central"/>
</dbReference>
<dbReference type="GO" id="GO:0019483">
    <property type="term" value="P:beta-alanine biosynthetic process"/>
    <property type="evidence" value="ECO:0007669"/>
    <property type="project" value="UniProtKB-UniPathway"/>
</dbReference>
<dbReference type="GO" id="GO:0006214">
    <property type="term" value="P:thymidine catabolic process"/>
    <property type="evidence" value="ECO:0000250"/>
    <property type="project" value="UniProtKB"/>
</dbReference>
<dbReference type="GO" id="GO:0006210">
    <property type="term" value="P:thymine catabolic process"/>
    <property type="evidence" value="ECO:0000318"/>
    <property type="project" value="GO_Central"/>
</dbReference>
<dbReference type="GO" id="GO:0006212">
    <property type="term" value="P:uracil catabolic process"/>
    <property type="evidence" value="ECO:0000250"/>
    <property type="project" value="UniProtKB"/>
</dbReference>
<dbReference type="CDD" id="cd02940">
    <property type="entry name" value="DHPD_FMN"/>
    <property type="match status" value="1"/>
</dbReference>
<dbReference type="FunFam" id="1.10.1060.10:FF:000007">
    <property type="entry name" value="Dihydropyrimidine dehydrogenase [NADP(+)]"/>
    <property type="match status" value="1"/>
</dbReference>
<dbReference type="FunFam" id="3.20.20.70:FF:000027">
    <property type="entry name" value="Dihydropyrimidine dehydrogenase [NADP(+)]"/>
    <property type="match status" value="1"/>
</dbReference>
<dbReference type="FunFam" id="3.30.70.20:FF:000023">
    <property type="entry name" value="Dihydropyrimidine dehydrogenase [NADP(+)]"/>
    <property type="match status" value="1"/>
</dbReference>
<dbReference type="FunFam" id="3.50.50.60:FF:000056">
    <property type="entry name" value="Dihydropyrimidine dehydrogenase [NADP(+)]"/>
    <property type="match status" value="1"/>
</dbReference>
<dbReference type="FunFam" id="3.50.50.60:FF:000061">
    <property type="entry name" value="Dihydropyrimidine dehydrogenase [NADP(+)]"/>
    <property type="match status" value="1"/>
</dbReference>
<dbReference type="Gene3D" id="3.30.70.20">
    <property type="match status" value="1"/>
</dbReference>
<dbReference type="Gene3D" id="3.20.20.70">
    <property type="entry name" value="Aldolase class I"/>
    <property type="match status" value="1"/>
</dbReference>
<dbReference type="Gene3D" id="1.10.1060.10">
    <property type="entry name" value="Alpha-helical ferredoxin"/>
    <property type="match status" value="1"/>
</dbReference>
<dbReference type="Gene3D" id="3.50.50.60">
    <property type="entry name" value="FAD/NAD(P)-binding domain"/>
    <property type="match status" value="2"/>
</dbReference>
<dbReference type="InterPro" id="IPR017896">
    <property type="entry name" value="4Fe4S_Fe-S-bd"/>
</dbReference>
<dbReference type="InterPro" id="IPR017900">
    <property type="entry name" value="4Fe4S_Fe_S_CS"/>
</dbReference>
<dbReference type="InterPro" id="IPR013785">
    <property type="entry name" value="Aldolase_TIM"/>
</dbReference>
<dbReference type="InterPro" id="IPR005720">
    <property type="entry name" value="Dihydroorotate_DH_cat"/>
</dbReference>
<dbReference type="InterPro" id="IPR028261">
    <property type="entry name" value="DPD_II"/>
</dbReference>
<dbReference type="InterPro" id="IPR036188">
    <property type="entry name" value="FAD/NAD-bd_sf"/>
</dbReference>
<dbReference type="InterPro" id="IPR023753">
    <property type="entry name" value="FAD/NAD-binding_dom"/>
</dbReference>
<dbReference type="InterPro" id="IPR009051">
    <property type="entry name" value="Helical_ferredxn"/>
</dbReference>
<dbReference type="PANTHER" id="PTHR43073">
    <property type="entry name" value="DIHYDROPYRIMIDINE DEHYDROGENASE [NADP(+)]"/>
    <property type="match status" value="1"/>
</dbReference>
<dbReference type="PANTHER" id="PTHR43073:SF2">
    <property type="entry name" value="DIHYDROPYRIMIDINE DEHYDROGENASE [NADP(+)]"/>
    <property type="match status" value="1"/>
</dbReference>
<dbReference type="Pfam" id="PF01180">
    <property type="entry name" value="DHO_dh"/>
    <property type="match status" value="1"/>
</dbReference>
<dbReference type="Pfam" id="PF14691">
    <property type="entry name" value="Fer4_20"/>
    <property type="match status" value="1"/>
</dbReference>
<dbReference type="Pfam" id="PF14697">
    <property type="entry name" value="Fer4_21"/>
    <property type="match status" value="1"/>
</dbReference>
<dbReference type="Pfam" id="PF07992">
    <property type="entry name" value="Pyr_redox_2"/>
    <property type="match status" value="1"/>
</dbReference>
<dbReference type="PRINTS" id="PR00419">
    <property type="entry name" value="ADXRDTASE"/>
</dbReference>
<dbReference type="SUPFAM" id="SSF54862">
    <property type="entry name" value="4Fe-4S ferredoxins"/>
    <property type="match status" value="1"/>
</dbReference>
<dbReference type="SUPFAM" id="SSF46548">
    <property type="entry name" value="alpha-helical ferredoxin"/>
    <property type="match status" value="1"/>
</dbReference>
<dbReference type="SUPFAM" id="SSF51395">
    <property type="entry name" value="FMN-linked oxidoreductases"/>
    <property type="match status" value="1"/>
</dbReference>
<dbReference type="SUPFAM" id="SSF51971">
    <property type="entry name" value="Nucleotide-binding domain"/>
    <property type="match status" value="2"/>
</dbReference>
<dbReference type="PROSITE" id="PS00198">
    <property type="entry name" value="4FE4S_FER_1"/>
    <property type="match status" value="1"/>
</dbReference>
<dbReference type="PROSITE" id="PS51379">
    <property type="entry name" value="4FE4S_FER_2"/>
    <property type="match status" value="3"/>
</dbReference>
<feature type="chain" id="PRO_0000079996" description="Dihydropyrimidine dehydrogenase [NADP(+)]">
    <location>
        <begin position="1"/>
        <end position="1025"/>
    </location>
</feature>
<feature type="domain" description="4Fe-4S ferredoxin-type 1" evidence="4">
    <location>
        <begin position="69"/>
        <end position="100"/>
    </location>
</feature>
<feature type="domain" description="4Fe-4S ferredoxin-type 2" evidence="4">
    <location>
        <begin position="944"/>
        <end position="976"/>
    </location>
</feature>
<feature type="domain" description="4Fe-4S ferredoxin-type 3" evidence="4">
    <location>
        <begin position="978"/>
        <end position="1007"/>
    </location>
</feature>
<feature type="active site" description="Proton acceptor" evidence="1">
    <location>
        <position position="671"/>
    </location>
</feature>
<feature type="binding site" evidence="1">
    <location>
        <position position="79"/>
    </location>
    <ligand>
        <name>[4Fe-4S] cluster</name>
        <dbReference type="ChEBI" id="CHEBI:49883"/>
        <label>1</label>
    </ligand>
</feature>
<feature type="binding site" evidence="1">
    <location>
        <position position="82"/>
    </location>
    <ligand>
        <name>[4Fe-4S] cluster</name>
        <dbReference type="ChEBI" id="CHEBI:49883"/>
        <label>1</label>
    </ligand>
</feature>
<feature type="binding site" evidence="1">
    <location>
        <position position="87"/>
    </location>
    <ligand>
        <name>[4Fe-4S] cluster</name>
        <dbReference type="ChEBI" id="CHEBI:49883"/>
        <label>1</label>
    </ligand>
</feature>
<feature type="binding site" evidence="1">
    <location>
        <position position="91"/>
    </location>
    <ligand>
        <name>[4Fe-4S] cluster</name>
        <dbReference type="ChEBI" id="CHEBI:49883"/>
        <label>2</label>
    </ligand>
</feature>
<feature type="binding site" evidence="1">
    <location>
        <position position="129"/>
    </location>
    <ligand>
        <name>FAD</name>
        <dbReference type="ChEBI" id="CHEBI:57692"/>
    </ligand>
</feature>
<feature type="binding site" evidence="1">
    <location>
        <position position="130"/>
    </location>
    <ligand>
        <name>[4Fe-4S] cluster</name>
        <dbReference type="ChEBI" id="CHEBI:49883"/>
        <label>2</label>
    </ligand>
</feature>
<feature type="binding site" evidence="1">
    <location>
        <position position="136"/>
    </location>
    <ligand>
        <name>[4Fe-4S] cluster</name>
        <dbReference type="ChEBI" id="CHEBI:49883"/>
        <label>2</label>
    </ligand>
</feature>
<feature type="binding site" evidence="1">
    <location>
        <position position="140"/>
    </location>
    <ligand>
        <name>[4Fe-4S] cluster</name>
        <dbReference type="ChEBI" id="CHEBI:49883"/>
        <label>1</label>
    </ligand>
</feature>
<feature type="binding site" evidence="1">
    <location>
        <position position="156"/>
    </location>
    <ligand>
        <name>[4Fe-4S] cluster</name>
        <dbReference type="ChEBI" id="CHEBI:49883"/>
        <label>2</label>
    </ligand>
</feature>
<feature type="binding site" evidence="1">
    <location>
        <begin position="194"/>
        <end position="198"/>
    </location>
    <ligand>
        <name>FAD</name>
        <dbReference type="ChEBI" id="CHEBI:57692"/>
    </ligand>
</feature>
<feature type="binding site" evidence="1">
    <location>
        <begin position="218"/>
        <end position="226"/>
    </location>
    <ligand>
        <name>FAD</name>
        <dbReference type="ChEBI" id="CHEBI:57692"/>
    </ligand>
</feature>
<feature type="binding site" evidence="1">
    <location>
        <position position="235"/>
    </location>
    <ligand>
        <name>FAD</name>
        <dbReference type="ChEBI" id="CHEBI:57692"/>
    </ligand>
</feature>
<feature type="binding site" evidence="1">
    <location>
        <position position="261"/>
    </location>
    <ligand>
        <name>FAD</name>
        <dbReference type="ChEBI" id="CHEBI:57692"/>
    </ligand>
</feature>
<feature type="binding site" evidence="1">
    <location>
        <begin position="340"/>
        <end position="343"/>
    </location>
    <ligand>
        <name>NADP(+)</name>
        <dbReference type="ChEBI" id="CHEBI:58349"/>
    </ligand>
</feature>
<feature type="binding site" evidence="1">
    <location>
        <begin position="364"/>
        <end position="365"/>
    </location>
    <ligand>
        <name>NADP(+)</name>
        <dbReference type="ChEBI" id="CHEBI:58349"/>
    </ligand>
</feature>
<feature type="binding site" evidence="1">
    <location>
        <position position="371"/>
    </location>
    <ligand>
        <name>NADP(+)</name>
        <dbReference type="ChEBI" id="CHEBI:58349"/>
    </ligand>
</feature>
<feature type="binding site" evidence="1">
    <location>
        <begin position="437"/>
        <end position="439"/>
    </location>
    <ligand>
        <name>NADP(+)</name>
        <dbReference type="ChEBI" id="CHEBI:58349"/>
    </ligand>
</feature>
<feature type="binding site" evidence="1">
    <location>
        <begin position="480"/>
        <end position="489"/>
    </location>
    <ligand>
        <name>FAD</name>
        <dbReference type="ChEBI" id="CHEBI:57692"/>
    </ligand>
</feature>
<feature type="binding site" evidence="1">
    <location>
        <begin position="481"/>
        <end position="487"/>
    </location>
    <ligand>
        <name>NADP(+)</name>
        <dbReference type="ChEBI" id="CHEBI:58349"/>
    </ligand>
</feature>
<feature type="binding site" evidence="1">
    <location>
        <position position="550"/>
    </location>
    <ligand>
        <name>FMN</name>
        <dbReference type="ChEBI" id="CHEBI:58210"/>
    </ligand>
</feature>
<feature type="binding site" evidence="1">
    <location>
        <begin position="574"/>
        <end position="575"/>
    </location>
    <ligand>
        <name>FMN</name>
        <dbReference type="ChEBI" id="CHEBI:58210"/>
    </ligand>
</feature>
<feature type="binding site" evidence="1">
    <location>
        <position position="609"/>
    </location>
    <ligand>
        <name>substrate</name>
    </ligand>
</feature>
<feature type="binding site" evidence="1">
    <location>
        <begin position="668"/>
        <end position="670"/>
    </location>
    <ligand>
        <name>substrate</name>
    </ligand>
</feature>
<feature type="binding site" evidence="1">
    <location>
        <position position="709"/>
    </location>
    <ligand>
        <name>FMN</name>
        <dbReference type="ChEBI" id="CHEBI:58210"/>
    </ligand>
</feature>
<feature type="binding site" evidence="1">
    <location>
        <begin position="736"/>
        <end position="737"/>
    </location>
    <ligand>
        <name>substrate</name>
    </ligand>
</feature>
<feature type="binding site" evidence="1">
    <location>
        <position position="767"/>
    </location>
    <ligand>
        <name>FMN</name>
        <dbReference type="ChEBI" id="CHEBI:58210"/>
    </ligand>
</feature>
<feature type="binding site" evidence="1">
    <location>
        <begin position="793"/>
        <end position="795"/>
    </location>
    <ligand>
        <name>FMN</name>
        <dbReference type="ChEBI" id="CHEBI:58210"/>
    </ligand>
</feature>
<feature type="binding site" evidence="1">
    <location>
        <begin position="816"/>
        <end position="817"/>
    </location>
    <ligand>
        <name>FMN</name>
        <dbReference type="ChEBI" id="CHEBI:58210"/>
    </ligand>
</feature>
<feature type="binding site" evidence="1">
    <location>
        <position position="953"/>
    </location>
    <ligand>
        <name>[4Fe-4S] cluster</name>
        <dbReference type="ChEBI" id="CHEBI:49883"/>
        <label>3</label>
    </ligand>
</feature>
<feature type="binding site" evidence="1">
    <location>
        <position position="956"/>
    </location>
    <ligand>
        <name>[4Fe-4S] cluster</name>
        <dbReference type="ChEBI" id="CHEBI:49883"/>
        <label>3</label>
    </ligand>
</feature>
<feature type="binding site" evidence="1">
    <location>
        <position position="959"/>
    </location>
    <ligand>
        <name>[4Fe-4S] cluster</name>
        <dbReference type="ChEBI" id="CHEBI:49883"/>
        <label>3</label>
    </ligand>
</feature>
<feature type="binding site" evidence="1">
    <location>
        <position position="963"/>
    </location>
    <ligand>
        <name>[4Fe-4S] cluster</name>
        <dbReference type="ChEBI" id="CHEBI:49883"/>
        <label>3</label>
    </ligand>
</feature>
<feature type="binding site" evidence="1">
    <location>
        <position position="986"/>
    </location>
    <ligand>
        <name>[4Fe-4S] cluster</name>
        <dbReference type="ChEBI" id="CHEBI:49883"/>
        <label>4</label>
    </ligand>
</feature>
<feature type="binding site" evidence="1">
    <location>
        <position position="989"/>
    </location>
    <ligand>
        <name>[4Fe-4S] cluster</name>
        <dbReference type="ChEBI" id="CHEBI:49883"/>
        <label>4</label>
    </ligand>
</feature>
<feature type="binding site" evidence="1">
    <location>
        <position position="992"/>
    </location>
    <ligand>
        <name>[4Fe-4S] cluster</name>
        <dbReference type="ChEBI" id="CHEBI:49883"/>
        <label>4</label>
    </ligand>
</feature>
<feature type="binding site" evidence="1">
    <location>
        <position position="996"/>
    </location>
    <ligand>
        <name>[4Fe-4S] cluster</name>
        <dbReference type="ChEBI" id="CHEBI:49883"/>
        <label>4</label>
    </ligand>
</feature>
<feature type="modified residue" description="N6-acetyllysine" evidence="2">
    <location>
        <position position="384"/>
    </location>
</feature>
<accession>Q28007</accession>
<accession>Q9TRV4</accession>
<evidence type="ECO:0000250" key="1"/>
<evidence type="ECO:0000250" key="2">
    <source>
        <dbReference type="UniProtKB" id="Q12882"/>
    </source>
</evidence>
<evidence type="ECO:0000250" key="3">
    <source>
        <dbReference type="UniProtKB" id="Q28943"/>
    </source>
</evidence>
<evidence type="ECO:0000255" key="4">
    <source>
        <dbReference type="PROSITE-ProRule" id="PRU00711"/>
    </source>
</evidence>
<evidence type="ECO:0000269" key="5">
    <source>
    </source>
</evidence>
<evidence type="ECO:0000305" key="6"/>
<organism>
    <name type="scientific">Bos taurus</name>
    <name type="common">Bovine</name>
    <dbReference type="NCBI Taxonomy" id="9913"/>
    <lineage>
        <taxon>Eukaryota</taxon>
        <taxon>Metazoa</taxon>
        <taxon>Chordata</taxon>
        <taxon>Craniata</taxon>
        <taxon>Vertebrata</taxon>
        <taxon>Euteleostomi</taxon>
        <taxon>Mammalia</taxon>
        <taxon>Eutheria</taxon>
        <taxon>Laurasiatheria</taxon>
        <taxon>Artiodactyla</taxon>
        <taxon>Ruminantia</taxon>
        <taxon>Pecora</taxon>
        <taxon>Bovidae</taxon>
        <taxon>Bovinae</taxon>
        <taxon>Bos</taxon>
    </lineage>
</organism>
<reference key="1">
    <citation type="journal article" date="1996" name="DNA Seq.">
        <title>cDNA cloning of bovine liver dihydropyrimidine dehydrogenase.</title>
        <authorList>
            <person name="Albin N."/>
            <person name="Johnson M.R."/>
            <person name="Diasio R.B."/>
        </authorList>
    </citation>
    <scope>NUCLEOTIDE SEQUENCE [MRNA]</scope>
    <source>
        <tissue>Liver</tissue>
    </source>
</reference>
<reference key="2">
    <citation type="journal article" date="1991" name="J. Biol. Chem.">
        <title>Inactivation of dihydropyrimidine dehydrogenase by 5-iodouracil.</title>
        <authorList>
            <person name="Porter D.J.T."/>
            <person name="Chestnut W.G."/>
            <person name="Taylor L.C.E."/>
            <person name="Merrill B.M."/>
            <person name="Spector T."/>
        </authorList>
    </citation>
    <scope>PROTEIN SEQUENCE OF 668-678</scope>
    <scope>ACTIVITY REGULATION</scope>
    <source>
        <tissue>Liver</tissue>
    </source>
</reference>
<sequence length="1025" mass="111697">MAPVLSKDVADIESILALNPRTQSRATLRSTLAKKLDKKHWKRNPDKNCFNCEKLENNFDDIKHTTLGERGALREAMRCLKCADAPCQKSCPTNLDIKSFITSISNKNYYGAAKMIFSDNPLGLTCGMVCPTSDLCVGGCNLYATEEGPINIGGLQQYATEVFKAMNIPQIRNPSLPPPEKMPEAYSAKIALLGAGPASISCASFLARLGYNDITIFEKQEYVGGISTSEIPQFRLPYDVVNFEIELMKDLGVKIICGKSLSVNDITLSTLKEEGYKAAFIGIGLPEPKKDHIFQGLTQDQGFYTSKDFLPLVAKSSKAGMCACHSPLLSIRGTVIVLGAGDTAFDCATSALRCGARRVFIVFRKGFVNIRAVPEEVELAREEKCEFLPFLSPRKVIVKGGRIVAMQFVRTEQDETGKWNEDGDQIACLKADVVISAFGSVLSDPKVKEALSPIKFNRWDLPEVDPETMQTSEPWVFAGGDVVGIANTTVEAVNDGKQASWYIHRYIQSQYGASVSAKPELPLFYTPIDLVDISVEMAALKFTNPFGLASATPTTSSSMIRRAFEAGWAFALTKTFSLDKDIVTNVSPRIIRGTTSGPMYGPGQSSFLNIELISEKTAAYWCQSVTELKADFPDNIVIASIMCSYNRNDWMELSRKAEASGADALELNLSCPHGMGERGMGLACGQDPELVRNICRWVRQAVRIPFFAKLTPNVTDIVSIARAAKEGGANGVTATNTVSGLMGLKADGTPWPAVGREKRTTYGGVSGTAIRPIALRAVTTIARALPEFPILATGGIDSAESGLQFLHGGASVLQVCSAIQNQDFTIIQDYCTGLKALLYLKSIEELQDWDGQSPATKSHQKGKPVPCIAELVGKKLPSFGPYLEKCKKIIAEEKLRLKKENVTVLPLERNHFIPKKPIPSVKDVIGKALQYLGTYGELNNTEQVVAVIDEEMCINCGKCYMTCNDSGYQAIQFDPETHLPTVTDTCTGCTLCLSVCPIIDCIKMVSRTTPYEPKRGLPLAVNPVS</sequence>
<name>DPYD_BOVIN</name>
<comment type="function">
    <text evidence="2">Involved in pyrimidine base degradation. Catalyzes the reduction of uracil and thymine. Also involved the degradation of the chemotherapeutic drug 5-fluorouracil.</text>
</comment>
<comment type="catalytic activity">
    <reaction evidence="2">
        <text>5,6-dihydrouracil + NADP(+) = uracil + NADPH + H(+)</text>
        <dbReference type="Rhea" id="RHEA:18093"/>
        <dbReference type="ChEBI" id="CHEBI:15378"/>
        <dbReference type="ChEBI" id="CHEBI:15901"/>
        <dbReference type="ChEBI" id="CHEBI:17568"/>
        <dbReference type="ChEBI" id="CHEBI:57783"/>
        <dbReference type="ChEBI" id="CHEBI:58349"/>
        <dbReference type="EC" id="1.3.1.2"/>
    </reaction>
    <physiologicalReaction direction="right-to-left" evidence="2">
        <dbReference type="Rhea" id="RHEA:18095"/>
    </physiologicalReaction>
</comment>
<comment type="catalytic activity">
    <reaction evidence="2">
        <text>5,6-dihydrothymine + NADP(+) = thymine + NADPH + H(+)</text>
        <dbReference type="Rhea" id="RHEA:58284"/>
        <dbReference type="ChEBI" id="CHEBI:15378"/>
        <dbReference type="ChEBI" id="CHEBI:17821"/>
        <dbReference type="ChEBI" id="CHEBI:27468"/>
        <dbReference type="ChEBI" id="CHEBI:57783"/>
        <dbReference type="ChEBI" id="CHEBI:58349"/>
        <dbReference type="EC" id="1.3.1.2"/>
    </reaction>
    <physiologicalReaction direction="right-to-left" evidence="2">
        <dbReference type="Rhea" id="RHEA:58286"/>
    </physiologicalReaction>
</comment>
<comment type="cofactor">
    <cofactor evidence="3">
        <name>FAD</name>
        <dbReference type="ChEBI" id="CHEBI:57692"/>
    </cofactor>
    <text evidence="3">Binds 2 FAD.</text>
</comment>
<comment type="cofactor">
    <cofactor evidence="3">
        <name>FMN</name>
        <dbReference type="ChEBI" id="CHEBI:58210"/>
    </cofactor>
    <text evidence="3">Binds 2 FMN.</text>
</comment>
<comment type="cofactor">
    <cofactor evidence="3">
        <name>[4Fe-4S] cluster</name>
        <dbReference type="ChEBI" id="CHEBI:49883"/>
    </cofactor>
    <text evidence="3">Binds 4 [4Fe-4S] clusters. Contains approximately 16 iron atoms per subunit.</text>
</comment>
<comment type="activity regulation">
    <text evidence="5">Inactivated by 5-iodouracil.</text>
</comment>
<comment type="pathway">
    <text evidence="2">Amino-acid biosynthesis; beta-alanine biosynthesis.</text>
</comment>
<comment type="subunit">
    <text evidence="2">Homodimer.</text>
</comment>
<comment type="subcellular location">
    <subcellularLocation>
        <location evidence="2">Cytoplasm</location>
    </subcellularLocation>
</comment>
<comment type="similarity">
    <text evidence="6">Belongs to the dihydropyrimidine dehydrogenase family.</text>
</comment>
<keyword id="KW-0004">4Fe-4S</keyword>
<keyword id="KW-0007">Acetylation</keyword>
<keyword id="KW-0963">Cytoplasm</keyword>
<keyword id="KW-0903">Direct protein sequencing</keyword>
<keyword id="KW-0274">FAD</keyword>
<keyword id="KW-0285">Flavoprotein</keyword>
<keyword id="KW-0288">FMN</keyword>
<keyword id="KW-0408">Iron</keyword>
<keyword id="KW-0411">Iron-sulfur</keyword>
<keyword id="KW-0479">Metal-binding</keyword>
<keyword id="KW-0521">NADP</keyword>
<keyword id="KW-0547">Nucleotide-binding</keyword>
<keyword id="KW-0560">Oxidoreductase</keyword>
<keyword id="KW-1185">Reference proteome</keyword>
<keyword id="KW-0677">Repeat</keyword>